<reference key="1">
    <citation type="journal article" date="2010" name="J. Bacteriol.">
        <title>Whole genome sequences of two Xylella fastidiosa strains (M12 and M23) causing almond leaf scorch disease in California.</title>
        <authorList>
            <person name="Chen J."/>
            <person name="Xie G."/>
            <person name="Han S."/>
            <person name="Chertkov O."/>
            <person name="Sims D."/>
            <person name="Civerolo E.L."/>
        </authorList>
    </citation>
    <scope>NUCLEOTIDE SEQUENCE [LARGE SCALE GENOMIC DNA]</scope>
    <source>
        <strain>M12</strain>
    </source>
</reference>
<organism>
    <name type="scientific">Xylella fastidiosa (strain M12)</name>
    <dbReference type="NCBI Taxonomy" id="405440"/>
    <lineage>
        <taxon>Bacteria</taxon>
        <taxon>Pseudomonadati</taxon>
        <taxon>Pseudomonadota</taxon>
        <taxon>Gammaproteobacteria</taxon>
        <taxon>Lysobacterales</taxon>
        <taxon>Lysobacteraceae</taxon>
        <taxon>Xylella</taxon>
    </lineage>
</organism>
<accession>B0U1Q8</accession>
<proteinExistence type="inferred from homology"/>
<protein>
    <recommendedName>
        <fullName evidence="1">Translation initiation factor IF-2</fullName>
    </recommendedName>
</protein>
<feature type="chain" id="PRO_1000093846" description="Translation initiation factor IF-2">
    <location>
        <begin position="1"/>
        <end position="892"/>
    </location>
</feature>
<feature type="domain" description="tr-type G">
    <location>
        <begin position="391"/>
        <end position="560"/>
    </location>
</feature>
<feature type="region of interest" description="Disordered" evidence="2">
    <location>
        <begin position="144"/>
        <end position="176"/>
    </location>
</feature>
<feature type="region of interest" description="Disordered" evidence="2">
    <location>
        <begin position="189"/>
        <end position="298"/>
    </location>
</feature>
<feature type="compositionally biased region" description="Low complexity" evidence="2">
    <location>
        <begin position="207"/>
        <end position="219"/>
    </location>
</feature>
<feature type="binding site" evidence="1">
    <location>
        <begin position="400"/>
        <end position="407"/>
    </location>
    <ligand>
        <name>GTP</name>
        <dbReference type="ChEBI" id="CHEBI:37565"/>
    </ligand>
</feature>
<feature type="binding site" evidence="1">
    <location>
        <begin position="446"/>
        <end position="450"/>
    </location>
    <ligand>
        <name>GTP</name>
        <dbReference type="ChEBI" id="CHEBI:37565"/>
    </ligand>
</feature>
<feature type="binding site" evidence="1">
    <location>
        <begin position="500"/>
        <end position="503"/>
    </location>
    <ligand>
        <name>GTP</name>
        <dbReference type="ChEBI" id="CHEBI:37565"/>
    </ligand>
</feature>
<dbReference type="EMBL" id="CP000941">
    <property type="protein sequence ID" value="ACA11236.1"/>
    <property type="molecule type" value="Genomic_DNA"/>
</dbReference>
<dbReference type="RefSeq" id="WP_004086265.1">
    <property type="nucleotide sequence ID" value="NC_010513.1"/>
</dbReference>
<dbReference type="SMR" id="B0U1Q8"/>
<dbReference type="KEGG" id="xfm:Xfasm12_0203"/>
<dbReference type="HOGENOM" id="CLU_006301_6_1_6"/>
<dbReference type="GO" id="GO:0005829">
    <property type="term" value="C:cytosol"/>
    <property type="evidence" value="ECO:0007669"/>
    <property type="project" value="TreeGrafter"/>
</dbReference>
<dbReference type="GO" id="GO:0005525">
    <property type="term" value="F:GTP binding"/>
    <property type="evidence" value="ECO:0007669"/>
    <property type="project" value="UniProtKB-KW"/>
</dbReference>
<dbReference type="GO" id="GO:0003924">
    <property type="term" value="F:GTPase activity"/>
    <property type="evidence" value="ECO:0007669"/>
    <property type="project" value="UniProtKB-UniRule"/>
</dbReference>
<dbReference type="GO" id="GO:0097216">
    <property type="term" value="F:guanosine tetraphosphate binding"/>
    <property type="evidence" value="ECO:0007669"/>
    <property type="project" value="UniProtKB-ARBA"/>
</dbReference>
<dbReference type="GO" id="GO:0003743">
    <property type="term" value="F:translation initiation factor activity"/>
    <property type="evidence" value="ECO:0007669"/>
    <property type="project" value="UniProtKB-UniRule"/>
</dbReference>
<dbReference type="CDD" id="cd01887">
    <property type="entry name" value="IF2_eIF5B"/>
    <property type="match status" value="1"/>
</dbReference>
<dbReference type="CDD" id="cd03702">
    <property type="entry name" value="IF2_mtIF2_II"/>
    <property type="match status" value="1"/>
</dbReference>
<dbReference type="CDD" id="cd03692">
    <property type="entry name" value="mtIF2_IVc"/>
    <property type="match status" value="1"/>
</dbReference>
<dbReference type="FunFam" id="2.40.30.10:FF:000008">
    <property type="entry name" value="Translation initiation factor IF-2"/>
    <property type="match status" value="1"/>
</dbReference>
<dbReference type="FunFam" id="2.40.30.10:FF:000054">
    <property type="entry name" value="Translation initiation factor IF-2"/>
    <property type="match status" value="1"/>
</dbReference>
<dbReference type="FunFam" id="3.40.50.10050:FF:000001">
    <property type="entry name" value="Translation initiation factor IF-2"/>
    <property type="match status" value="1"/>
</dbReference>
<dbReference type="FunFam" id="3.40.50.300:FF:000019">
    <property type="entry name" value="Translation initiation factor IF-2"/>
    <property type="match status" value="1"/>
</dbReference>
<dbReference type="Gene3D" id="3.40.50.300">
    <property type="entry name" value="P-loop containing nucleotide triphosphate hydrolases"/>
    <property type="match status" value="1"/>
</dbReference>
<dbReference type="Gene3D" id="3.30.56.50">
    <property type="entry name" value="Putative DNA-binding domain, N-terminal subdomain of bacterial translation initiation factor IF2"/>
    <property type="match status" value="1"/>
</dbReference>
<dbReference type="Gene3D" id="2.40.30.10">
    <property type="entry name" value="Translation factors"/>
    <property type="match status" value="2"/>
</dbReference>
<dbReference type="Gene3D" id="3.40.50.10050">
    <property type="entry name" value="Translation initiation factor IF- 2, domain 3"/>
    <property type="match status" value="1"/>
</dbReference>
<dbReference type="HAMAP" id="MF_00100_B">
    <property type="entry name" value="IF_2_B"/>
    <property type="match status" value="1"/>
</dbReference>
<dbReference type="InterPro" id="IPR009061">
    <property type="entry name" value="DNA-bd_dom_put_sf"/>
</dbReference>
<dbReference type="InterPro" id="IPR053905">
    <property type="entry name" value="EF-G-like_DII"/>
</dbReference>
<dbReference type="InterPro" id="IPR004161">
    <property type="entry name" value="EFTu-like_2"/>
</dbReference>
<dbReference type="InterPro" id="IPR013575">
    <property type="entry name" value="IF2_assoc_dom_bac"/>
</dbReference>
<dbReference type="InterPro" id="IPR044145">
    <property type="entry name" value="IF2_II"/>
</dbReference>
<dbReference type="InterPro" id="IPR006847">
    <property type="entry name" value="IF2_N"/>
</dbReference>
<dbReference type="InterPro" id="IPR027417">
    <property type="entry name" value="P-loop_NTPase"/>
</dbReference>
<dbReference type="InterPro" id="IPR005225">
    <property type="entry name" value="Small_GTP-bd"/>
</dbReference>
<dbReference type="InterPro" id="IPR000795">
    <property type="entry name" value="T_Tr_GTP-bd_dom"/>
</dbReference>
<dbReference type="InterPro" id="IPR000178">
    <property type="entry name" value="TF_IF2_bacterial-like"/>
</dbReference>
<dbReference type="InterPro" id="IPR015760">
    <property type="entry name" value="TIF_IF2"/>
</dbReference>
<dbReference type="InterPro" id="IPR023115">
    <property type="entry name" value="TIF_IF2_dom3"/>
</dbReference>
<dbReference type="InterPro" id="IPR036925">
    <property type="entry name" value="TIF_IF2_dom3_sf"/>
</dbReference>
<dbReference type="InterPro" id="IPR009000">
    <property type="entry name" value="Transl_B-barrel_sf"/>
</dbReference>
<dbReference type="NCBIfam" id="TIGR00487">
    <property type="entry name" value="IF-2"/>
    <property type="match status" value="1"/>
</dbReference>
<dbReference type="NCBIfam" id="TIGR00231">
    <property type="entry name" value="small_GTP"/>
    <property type="match status" value="1"/>
</dbReference>
<dbReference type="PANTHER" id="PTHR43381:SF5">
    <property type="entry name" value="TR-TYPE G DOMAIN-CONTAINING PROTEIN"/>
    <property type="match status" value="1"/>
</dbReference>
<dbReference type="PANTHER" id="PTHR43381">
    <property type="entry name" value="TRANSLATION INITIATION FACTOR IF-2-RELATED"/>
    <property type="match status" value="1"/>
</dbReference>
<dbReference type="Pfam" id="PF22042">
    <property type="entry name" value="EF-G_D2"/>
    <property type="match status" value="1"/>
</dbReference>
<dbReference type="Pfam" id="PF00009">
    <property type="entry name" value="GTP_EFTU"/>
    <property type="match status" value="1"/>
</dbReference>
<dbReference type="Pfam" id="PF03144">
    <property type="entry name" value="GTP_EFTU_D2"/>
    <property type="match status" value="1"/>
</dbReference>
<dbReference type="Pfam" id="PF11987">
    <property type="entry name" value="IF-2"/>
    <property type="match status" value="1"/>
</dbReference>
<dbReference type="Pfam" id="PF08364">
    <property type="entry name" value="IF2_assoc"/>
    <property type="match status" value="1"/>
</dbReference>
<dbReference type="Pfam" id="PF04760">
    <property type="entry name" value="IF2_N"/>
    <property type="match status" value="1"/>
</dbReference>
<dbReference type="SUPFAM" id="SSF52156">
    <property type="entry name" value="Initiation factor IF2/eIF5b, domain 3"/>
    <property type="match status" value="1"/>
</dbReference>
<dbReference type="SUPFAM" id="SSF52540">
    <property type="entry name" value="P-loop containing nucleoside triphosphate hydrolases"/>
    <property type="match status" value="1"/>
</dbReference>
<dbReference type="SUPFAM" id="SSF46955">
    <property type="entry name" value="Putative DNA-binding domain"/>
    <property type="match status" value="1"/>
</dbReference>
<dbReference type="SUPFAM" id="SSF50447">
    <property type="entry name" value="Translation proteins"/>
    <property type="match status" value="2"/>
</dbReference>
<dbReference type="PROSITE" id="PS51722">
    <property type="entry name" value="G_TR_2"/>
    <property type="match status" value="1"/>
</dbReference>
<dbReference type="PROSITE" id="PS01176">
    <property type="entry name" value="IF2"/>
    <property type="match status" value="1"/>
</dbReference>
<keyword id="KW-0963">Cytoplasm</keyword>
<keyword id="KW-0342">GTP-binding</keyword>
<keyword id="KW-0396">Initiation factor</keyword>
<keyword id="KW-0547">Nucleotide-binding</keyword>
<keyword id="KW-0648">Protein biosynthesis</keyword>
<gene>
    <name evidence="1" type="primary">infB</name>
    <name type="ordered locus">Xfasm12_0203</name>
</gene>
<evidence type="ECO:0000255" key="1">
    <source>
        <dbReference type="HAMAP-Rule" id="MF_00100"/>
    </source>
</evidence>
<evidence type="ECO:0000256" key="2">
    <source>
        <dbReference type="SAM" id="MobiDB-lite"/>
    </source>
</evidence>
<sequence>MSQQTTIRKLAELVNTPVEKLLEQLAGAGMKFSGPDQVVTSTEKMKLLGFLRRTHGKSDVSVGTVREAPKKITLNRRRLQEVTVNAGRNKTTVNVEVRQKRTYVKTPESEYHTPTKPPIELADAERVEILRKLEESRQRNLAEQQRLAEVDRQRVEEQERKRREEEQAELERQKTESRVVEEILVKTDSNSVKPVSKPISEERTRALPRTVRPTPAARPSVSRSDDRNSNGGVRHKPRGSHVIVSDEDDSARRFVGQMHLTAAERARRGSNTRGKGGGSHRGATHRGNENSIRSSGAHGFERPTVAVVREVAVGDTITVADLAQKLALKSGDMVKALFKMGVMVTITQTIDHDTAVLVSEELGHKVTRASSSDFEDALLAHTEEVHGEPVPRPPVVTIMGHVDHGKTSLLDYIRRTKIAVGEAGGITQHIGAYHVETPRGVISFLDTPGHAAFTSMRARGAKITDIVVLVVAADDGVMPQTKEAVQHARAAGVPLIVAVSKIDKSTADPQRVKNELLTESVVAEEFGGDTQFVELSAKTGVGVDALLDAISIQAEVLELKAVIEGRATGTVIESSLDKGRGPVATVLVQQGRLKKGDYLVCGTHYGRVRALFDEVGHQPLAASPSIPVQVLGLSGVPDAGDDFVVVDDERLAKDVAQQREAKRRESRLVTSAGNRMEDILAQMGKGENQQVLNLLIKADVQGSLEALKQALVALSNDDIRINVIHVGVGGITESDANSAVTSKATVIGFNVRADASARKIIEANGVDLRYFSIIYDVIDQVKQVASGLLGVEIREEIIGVAEVRDVFRSSKFGAVAGCMIIEGVVKRSKPIRVLRDNTVVFEGELESLRRFKENVDEVRNSTECGIGVKAYNDVRVGDSIECFERIEVARTL</sequence>
<comment type="function">
    <text evidence="1">One of the essential components for the initiation of protein synthesis. Protects formylmethionyl-tRNA from spontaneous hydrolysis and promotes its binding to the 30S ribosomal subunits. Also involved in the hydrolysis of GTP during the formation of the 70S ribosomal complex.</text>
</comment>
<comment type="subcellular location">
    <subcellularLocation>
        <location evidence="1">Cytoplasm</location>
    </subcellularLocation>
</comment>
<comment type="similarity">
    <text evidence="1">Belongs to the TRAFAC class translation factor GTPase superfamily. Classic translation factor GTPase family. IF-2 subfamily.</text>
</comment>
<name>IF2_XYLFM</name>